<evidence type="ECO:0000250" key="1"/>
<evidence type="ECO:0000255" key="2">
    <source>
        <dbReference type="PROSITE-ProRule" id="PRU01187"/>
    </source>
</evidence>
<evidence type="ECO:0000255" key="3">
    <source>
        <dbReference type="PROSITE-ProRule" id="PRU01188"/>
    </source>
</evidence>
<evidence type="ECO:0000256" key="4">
    <source>
        <dbReference type="SAM" id="MobiDB-lite"/>
    </source>
</evidence>
<evidence type="ECO:0000269" key="5">
    <source>
    </source>
</evidence>
<evidence type="ECO:0000269" key="6">
    <source>
    </source>
</evidence>
<evidence type="ECO:0000269" key="7">
    <source>
    </source>
</evidence>
<evidence type="ECO:0000269" key="8">
    <source>
    </source>
</evidence>
<evidence type="ECO:0000269" key="9">
    <source>
    </source>
</evidence>
<evidence type="ECO:0000269" key="10">
    <source>
    </source>
</evidence>
<evidence type="ECO:0000269" key="11">
    <source>
    </source>
</evidence>
<evidence type="ECO:0000269" key="12">
    <source>
    </source>
</evidence>
<evidence type="ECO:0000269" key="13">
    <source>
    </source>
</evidence>
<evidence type="ECO:0000305" key="14"/>
<evidence type="ECO:0000312" key="15">
    <source>
        <dbReference type="WormBase" id="DY3.2"/>
    </source>
</evidence>
<accession>Q21443</accession>
<accession>O62127</accession>
<organism>
    <name type="scientific">Caenorhabditis elegans</name>
    <dbReference type="NCBI Taxonomy" id="6239"/>
    <lineage>
        <taxon>Eukaryota</taxon>
        <taxon>Metazoa</taxon>
        <taxon>Ecdysozoa</taxon>
        <taxon>Nematoda</taxon>
        <taxon>Chromadorea</taxon>
        <taxon>Rhabditida</taxon>
        <taxon>Rhabditina</taxon>
        <taxon>Rhabditomorpha</taxon>
        <taxon>Rhabditoidea</taxon>
        <taxon>Rhabditidae</taxon>
        <taxon>Peloderinae</taxon>
        <taxon>Caenorhabditis</taxon>
    </lineage>
</organism>
<gene>
    <name evidence="15" type="primary">lmn-1</name>
    <name evidence="15" type="synonym">lam-1</name>
    <name evidence="15" type="ORF">DY3.2</name>
</gene>
<protein>
    <recommendedName>
        <fullName>Lamin-1</fullName>
    </recommendedName>
    <alternativeName>
        <fullName>Ce-lamin</fullName>
    </alternativeName>
    <alternativeName>
        <fullName>CeLam-1</fullName>
    </alternativeName>
</protein>
<reference key="1">
    <citation type="journal article" date="1993" name="Eur. J. Cell Biol.">
        <title>A nuclear lamin protein of the nematode Caenorhabditis elegans with unusual structural features: cDNA cloning and gene organization.</title>
        <authorList>
            <person name="Riemer D."/>
            <person name="Dodemont H."/>
            <person name="Weber K."/>
        </authorList>
    </citation>
    <scope>NUCLEOTIDE SEQUENCE [GENOMIC DNA]</scope>
    <source>
        <strain>Bristol N2</strain>
    </source>
</reference>
<reference key="2">
    <citation type="journal article" date="1998" name="Science">
        <title>Genome sequence of the nematode C. elegans: a platform for investigating biology.</title>
        <authorList>
            <consortium name="The C. elegans sequencing consortium"/>
        </authorList>
    </citation>
    <scope>NUCLEOTIDE SEQUENCE [LARGE SCALE GENOMIC DNA]</scope>
    <source>
        <strain>Bristol N2</strain>
    </source>
</reference>
<reference key="3">
    <citation type="journal article" date="2000" name="Mol. Biol. Cell">
        <title>Essential roles for Caenorhabditis elegans lamin gene in nuclear organization, cell cycle progression, and spatial organization of nuclear pore complexes.</title>
        <authorList>
            <person name="Liu J."/>
            <person name="Ben-Shahar T.R."/>
            <person name="Riemer D."/>
            <person name="Treinin M."/>
            <person name="Spann P."/>
            <person name="Weber K."/>
            <person name="Fire A."/>
            <person name="Gruenbaum Y."/>
        </authorList>
    </citation>
    <scope>FUNCTION</scope>
    <scope>SUBCELLULAR LOCATION</scope>
    <scope>TISSUE SPECIFICITY</scope>
    <scope>DEVELOPMENTAL STAGE</scope>
</reference>
<reference key="4">
    <citation type="journal article" date="2000" name="Mol. Biol. Cell">
        <title>C. elegans nuclear envelope proteins emerin, MAN1, lamin, and nucleoporins reveal unique timing of nuclear envelope breakdown during mitosis.</title>
        <authorList>
            <person name="Lee K.K."/>
            <person name="Gruenbaum Y."/>
            <person name="Spann P."/>
            <person name="Liu J."/>
            <person name="Wilson K.L."/>
        </authorList>
    </citation>
    <scope>SUBCELLULAR LOCATION</scope>
</reference>
<reference key="5">
    <citation type="journal article" date="2002" name="J. Cell Sci.">
        <title>The expression, lamin-dependent localization and RNAi depletion phenotype for emerin in C. elegans.</title>
        <authorList>
            <person name="Gruenbaum Y."/>
            <person name="Lee K.K."/>
            <person name="Liu J."/>
            <person name="Cohen M."/>
            <person name="Wilson K.L."/>
        </authorList>
    </citation>
    <scope>INTERACTION WITH EMR-1</scope>
</reference>
<reference key="6">
    <citation type="journal article" date="2002" name="Mol. Biol. Cell">
        <title>Lamin-dependent localization of UNC-84, a protein required for nuclear migration in Caenorhabditis elegans.</title>
        <authorList>
            <person name="Lee K.K."/>
            <person name="Starr D.A."/>
            <person name="Cohen M."/>
            <person name="Liu J."/>
            <person name="Han M."/>
            <person name="Wilson K.L."/>
            <person name="Gruenbaum Y."/>
        </authorList>
    </citation>
    <scope>SUBCELLULAR LOCATION</scope>
    <scope>DISRUPTION PHENOTYPE</scope>
</reference>
<reference key="7">
    <citation type="journal article" date="2002" name="J. Struct. Biol.">
        <title>Transmission electron microscope studies of the nuclear envelope in Caenorhabditis elegans embryos.</title>
        <authorList>
            <person name="Cohen M."/>
            <person name="Tzur Y.B."/>
            <person name="Neufeld E."/>
            <person name="Feinstein N."/>
            <person name="Delannoy M.R."/>
            <person name="Wilson K.L."/>
            <person name="Gruenbaum Y."/>
        </authorList>
    </citation>
    <scope>SUBCELLULAR LOCATION</scope>
</reference>
<reference key="8">
    <citation type="journal article" date="2002" name="J. Struct. Biol.">
        <title>Fate of the nuclear lamina during Caenorhabditis elegans apoptosis.</title>
        <authorList>
            <person name="Tzur Y.B."/>
            <person name="Hersh B.M."/>
            <person name="Horvitz H.R."/>
            <person name="Gruenbaum Y."/>
        </authorList>
    </citation>
    <scope>FUNCTION</scope>
</reference>
<reference key="9">
    <citation type="journal article" date="2003" name="Proc. Natl. Acad. Sci. U.S.A.">
        <title>MAN1 and emerin have overlapping function(s) essential for chromosome segregation and cell division in Caenorhabditis elegans.</title>
        <authorList>
            <person name="Liu J."/>
            <person name="Lee K.K."/>
            <person name="Segura-Totten M."/>
            <person name="Neufeld E."/>
            <person name="Wilson K.L."/>
            <person name="Gruenbaum Y."/>
        </authorList>
    </citation>
    <scope>INTERACTION WITH LEM-2 AND EMR-1</scope>
</reference>
<reference key="10">
    <citation type="journal article" date="2006" name="Curr. Biol.">
        <title>MEL-28, a novel nuclear-envelope and kinetochore protein essential for zygotic nuclear-envelope assembly in C. elegans.</title>
        <authorList>
            <person name="Galy V."/>
            <person name="Askjaer P."/>
            <person name="Franz C."/>
            <person name="Lopez-Iglesias C."/>
            <person name="Mattaj I.W."/>
        </authorList>
    </citation>
    <scope>SUBCELLULAR LOCATION</scope>
</reference>
<reference key="11">
    <citation type="journal article" date="2014" name="Mol. Biol. Cell">
        <title>The Caenorhabditis elegans SUN protein UNC-84 interacts with lamin to transfer forces from the cytoplasm to the nucleoskeleton during nuclear migration.</title>
        <authorList>
            <person name="Bone C.R."/>
            <person name="Tapley E.C."/>
            <person name="Gorjanacz M."/>
            <person name="Starr D.A."/>
        </authorList>
    </citation>
    <scope>FUNCTION</scope>
    <scope>INTERACTION WITH UNC-84</scope>
    <scope>SUBCELLULAR LOCATION</scope>
    <scope>DISRUPTION PHENOTYPE</scope>
</reference>
<name>LMN1_CAEEL</name>
<keyword id="KW-0007">Acetylation</keyword>
<keyword id="KW-0175">Coiled coil</keyword>
<keyword id="KW-0403">Intermediate filament</keyword>
<keyword id="KW-0449">Lipoprotein</keyword>
<keyword id="KW-0472">Membrane</keyword>
<keyword id="KW-0488">Methylation</keyword>
<keyword id="KW-0539">Nucleus</keyword>
<keyword id="KW-0636">Prenylation</keyword>
<keyword id="KW-1185">Reference proteome</keyword>
<sequence length="566" mass="64084">MSSRKGTRSSRIVTLERSANSSLSNNGGGDDSFGSTLLETSRLQEKDHLTSLNSRLATYIDKVRQLEQENNRLQVQIRDIEVVEKKEKSNLADRFEAEKARLRRALDSAQDELAKYRIEYDAAKVEVKKLKPQVEKLERELAGAEEQALHAQSIADQSQAKQKTLQARNDKLVVENDDLKKQNITLRDTVEGLKKAVEDETLLRTAANNKIKALEEDLAFALQQHKGELEEVRHKRQVDMTTYAKQINDEYQSKLQDQIEEMRAQFKNNLHQNKTAFEDAYKNKLNAARERQEEAVSEAIHLRARVRDLETSSSGNASLIERLRSELDTLKRSFQEKLDDKDARIAELNQEIERMMSEFHDLLDVKIQLDAELKTYQALLEGEEERLNLTQEAPQNTSVHHVSFSSGGASAQRGVKRRRVVDVNGEDQDIDYLNRRSKLNKETVGPVGIDEVDEEGKWVRVANNSEEEQSIGGYKLVVKAGNKEASFQFSSRMKLAPHASATVWSADAGAVHHPPEVYVMKKQQWPIGDNPSARLEDSEGDTVSSITVEFSESSDPSDPADRCSIM</sequence>
<proteinExistence type="evidence at protein level"/>
<dbReference type="EMBL" id="X74027">
    <property type="protein sequence ID" value="CAA52188.1"/>
    <property type="molecule type" value="Genomic_DNA"/>
</dbReference>
<dbReference type="EMBL" id="BX284601">
    <property type="protein sequence ID" value="CAB09411.1"/>
    <property type="molecule type" value="Genomic_DNA"/>
</dbReference>
<dbReference type="PIR" id="S42257">
    <property type="entry name" value="S42257"/>
</dbReference>
<dbReference type="PIR" id="T20390">
    <property type="entry name" value="T20390"/>
</dbReference>
<dbReference type="RefSeq" id="NP_492371.1">
    <property type="nucleotide sequence ID" value="NM_059970.7"/>
</dbReference>
<dbReference type="SMR" id="Q21443"/>
<dbReference type="BioGRID" id="38120">
    <property type="interactions" value="72"/>
</dbReference>
<dbReference type="DIP" id="DIP-29640N"/>
<dbReference type="FunCoup" id="Q21443">
    <property type="interactions" value="1541"/>
</dbReference>
<dbReference type="IntAct" id="Q21443">
    <property type="interactions" value="43"/>
</dbReference>
<dbReference type="STRING" id="6239.DY3.2.2"/>
<dbReference type="iPTMnet" id="Q21443"/>
<dbReference type="PaxDb" id="6239-DY3.2.2"/>
<dbReference type="PeptideAtlas" id="Q21443"/>
<dbReference type="EnsemblMetazoa" id="DY3.2.1">
    <property type="protein sequence ID" value="DY3.2.1"/>
    <property type="gene ID" value="WBGene00003052"/>
</dbReference>
<dbReference type="GeneID" id="172687"/>
<dbReference type="KEGG" id="cel:CELE_DY3.2"/>
<dbReference type="UCSC" id="DY3.2.1">
    <property type="organism name" value="c. elegans"/>
</dbReference>
<dbReference type="AGR" id="WB:WBGene00003052"/>
<dbReference type="CTD" id="172687"/>
<dbReference type="WormBase" id="DY3.2">
    <property type="protein sequence ID" value="CE15746"/>
    <property type="gene ID" value="WBGene00003052"/>
    <property type="gene designation" value="lmn-1"/>
</dbReference>
<dbReference type="eggNOG" id="KOG0977">
    <property type="taxonomic scope" value="Eukaryota"/>
</dbReference>
<dbReference type="GeneTree" id="ENSGT00940000168319"/>
<dbReference type="HOGENOM" id="CLU_012560_9_2_1"/>
<dbReference type="InParanoid" id="Q21443"/>
<dbReference type="OMA" id="GYEMIKT"/>
<dbReference type="OrthoDB" id="102442at2759"/>
<dbReference type="PhylomeDB" id="Q21443"/>
<dbReference type="Reactome" id="R-CEL-2559584">
    <property type="pathway name" value="Formation of Senescence-Associated Heterochromatin Foci (SAHF)"/>
</dbReference>
<dbReference type="Reactome" id="R-CEL-4419969">
    <property type="pathway name" value="Depolymerization of the Nuclear Lamina"/>
</dbReference>
<dbReference type="Reactome" id="R-CEL-9013405">
    <property type="pathway name" value="RHOD GTPase cycle"/>
</dbReference>
<dbReference type="Reactome" id="R-CEL-9035034">
    <property type="pathway name" value="RHOF GTPase cycle"/>
</dbReference>
<dbReference type="SignaLink" id="Q21443"/>
<dbReference type="PRO" id="PR:Q21443"/>
<dbReference type="Proteomes" id="UP000001940">
    <property type="component" value="Chromosome I"/>
</dbReference>
<dbReference type="Bgee" id="WBGene00003052">
    <property type="expression patterns" value="Expressed in embryo and 4 other cell types or tissues"/>
</dbReference>
<dbReference type="GO" id="GO:0005638">
    <property type="term" value="C:lamin filament"/>
    <property type="evidence" value="ECO:0000250"/>
    <property type="project" value="WormBase"/>
</dbReference>
<dbReference type="GO" id="GO:0005635">
    <property type="term" value="C:nuclear envelope"/>
    <property type="evidence" value="ECO:0000314"/>
    <property type="project" value="WormBase"/>
</dbReference>
<dbReference type="GO" id="GO:0005637">
    <property type="term" value="C:nuclear inner membrane"/>
    <property type="evidence" value="ECO:0007669"/>
    <property type="project" value="UniProtKB-SubCell"/>
</dbReference>
<dbReference type="GO" id="GO:0005652">
    <property type="term" value="C:nuclear lamina"/>
    <property type="evidence" value="ECO:0000318"/>
    <property type="project" value="GO_Central"/>
</dbReference>
<dbReference type="GO" id="GO:0034399">
    <property type="term" value="C:nuclear periphery"/>
    <property type="evidence" value="ECO:0000314"/>
    <property type="project" value="WormBase"/>
</dbReference>
<dbReference type="GO" id="GO:0042393">
    <property type="term" value="F:histone binding"/>
    <property type="evidence" value="ECO:0000314"/>
    <property type="project" value="WormBase"/>
</dbReference>
<dbReference type="GO" id="GO:0042802">
    <property type="term" value="F:identical protein binding"/>
    <property type="evidence" value="ECO:0000353"/>
    <property type="project" value="IntAct"/>
</dbReference>
<dbReference type="GO" id="GO:0005200">
    <property type="term" value="F:structural constituent of cytoskeleton"/>
    <property type="evidence" value="ECO:0000318"/>
    <property type="project" value="GO_Central"/>
</dbReference>
<dbReference type="GO" id="GO:0005198">
    <property type="term" value="F:structural molecule activity"/>
    <property type="evidence" value="ECO:0000315"/>
    <property type="project" value="WormBase"/>
</dbReference>
<dbReference type="GO" id="GO:0008340">
    <property type="term" value="P:determination of adult lifespan"/>
    <property type="evidence" value="ECO:0000315"/>
    <property type="project" value="UniProtKB"/>
</dbReference>
<dbReference type="GO" id="GO:0009792">
    <property type="term" value="P:embryo development ending in birth or egg hatching"/>
    <property type="evidence" value="ECO:0000315"/>
    <property type="project" value="UniProtKB"/>
</dbReference>
<dbReference type="GO" id="GO:0007281">
    <property type="term" value="P:germ cell development"/>
    <property type="evidence" value="ECO:0000315"/>
    <property type="project" value="WormBase"/>
</dbReference>
<dbReference type="GO" id="GO:0031507">
    <property type="term" value="P:heterochromatin formation"/>
    <property type="evidence" value="ECO:0000318"/>
    <property type="project" value="GO_Central"/>
</dbReference>
<dbReference type="GO" id="GO:0006998">
    <property type="term" value="P:nuclear envelope organization"/>
    <property type="evidence" value="ECO:0000318"/>
    <property type="project" value="GO_Central"/>
</dbReference>
<dbReference type="GO" id="GO:0007097">
    <property type="term" value="P:nuclear migration"/>
    <property type="evidence" value="ECO:0000318"/>
    <property type="project" value="GO_Central"/>
</dbReference>
<dbReference type="GO" id="GO:0030473">
    <property type="term" value="P:nuclear migration along microtubule"/>
    <property type="evidence" value="ECO:0000315"/>
    <property type="project" value="WormBase"/>
</dbReference>
<dbReference type="GO" id="GO:0051664">
    <property type="term" value="P:nuclear pore localization"/>
    <property type="evidence" value="ECO:0000315"/>
    <property type="project" value="WormBase"/>
</dbReference>
<dbReference type="GO" id="GO:0006997">
    <property type="term" value="P:nucleus organization"/>
    <property type="evidence" value="ECO:0000315"/>
    <property type="project" value="WormBase"/>
</dbReference>
<dbReference type="GO" id="GO:0008284">
    <property type="term" value="P:positive regulation of cell population proliferation"/>
    <property type="evidence" value="ECO:0000315"/>
    <property type="project" value="WormBase"/>
</dbReference>
<dbReference type="GO" id="GO:0008104">
    <property type="term" value="P:protein localization"/>
    <property type="evidence" value="ECO:0000315"/>
    <property type="project" value="WormBase"/>
</dbReference>
<dbReference type="GO" id="GO:0090435">
    <property type="term" value="P:protein localization to nuclear envelope"/>
    <property type="evidence" value="ECO:0000318"/>
    <property type="project" value="GO_Central"/>
</dbReference>
<dbReference type="GO" id="GO:0051983">
    <property type="term" value="P:regulation of chromosome segregation"/>
    <property type="evidence" value="ECO:0000315"/>
    <property type="project" value="WormBase"/>
</dbReference>
<dbReference type="GO" id="GO:0007346">
    <property type="term" value="P:regulation of mitotic cell cycle"/>
    <property type="evidence" value="ECO:0000315"/>
    <property type="project" value="WormBase"/>
</dbReference>
<dbReference type="FunFam" id="2.60.40.1260:FF:000005">
    <property type="entry name" value="CRE-LMN-1 protein"/>
    <property type="match status" value="1"/>
</dbReference>
<dbReference type="FunFam" id="1.20.5.170:FF:000058">
    <property type="entry name" value="Intermediate filament protein B"/>
    <property type="match status" value="1"/>
</dbReference>
<dbReference type="Gene3D" id="1.20.5.170">
    <property type="match status" value="1"/>
</dbReference>
<dbReference type="Gene3D" id="2.60.40.1260">
    <property type="entry name" value="Lamin Tail domain"/>
    <property type="match status" value="1"/>
</dbReference>
<dbReference type="Gene3D" id="1.20.5.1160">
    <property type="entry name" value="Vasodilator-stimulated phosphoprotein"/>
    <property type="match status" value="1"/>
</dbReference>
<dbReference type="InterPro" id="IPR039008">
    <property type="entry name" value="IF_rod_dom"/>
</dbReference>
<dbReference type="InterPro" id="IPR001322">
    <property type="entry name" value="Lamin_tail_dom"/>
</dbReference>
<dbReference type="InterPro" id="IPR036415">
    <property type="entry name" value="Lamin_tail_dom_sf"/>
</dbReference>
<dbReference type="PANTHER" id="PTHR45721">
    <property type="entry name" value="LAMIN DM0-RELATED"/>
    <property type="match status" value="1"/>
</dbReference>
<dbReference type="PANTHER" id="PTHR45721:SF11">
    <property type="entry name" value="LAMIN DM0-RELATED"/>
    <property type="match status" value="1"/>
</dbReference>
<dbReference type="Pfam" id="PF00038">
    <property type="entry name" value="Filament"/>
    <property type="match status" value="1"/>
</dbReference>
<dbReference type="Pfam" id="PF00932">
    <property type="entry name" value="LTD"/>
    <property type="match status" value="1"/>
</dbReference>
<dbReference type="SMART" id="SM01391">
    <property type="entry name" value="Filament"/>
    <property type="match status" value="1"/>
</dbReference>
<dbReference type="SUPFAM" id="SSF64593">
    <property type="entry name" value="Intermediate filament protein, coiled coil region"/>
    <property type="match status" value="2"/>
</dbReference>
<dbReference type="SUPFAM" id="SSF74853">
    <property type="entry name" value="Lamin A/C globular tail domain"/>
    <property type="match status" value="1"/>
</dbReference>
<dbReference type="PROSITE" id="PS51842">
    <property type="entry name" value="IF_ROD_2"/>
    <property type="match status" value="1"/>
</dbReference>
<dbReference type="PROSITE" id="PS51841">
    <property type="entry name" value="LTD"/>
    <property type="match status" value="1"/>
</dbReference>
<comment type="function">
    <text evidence="6 9 13">Major component of the nuclear lamina, a fibrous layer on the nucleoplasmic side of the inner nuclear membrane (PubMed:11071918, PubMed:25057012). Provides a framework for the nuclear envelope and probably also interacts with chromatin (PubMed:11071918, PubMed:25057012). Essential to maintain the shape and integrity of the nucleus, and for DNA replication (PubMed:11071918). Involved in spatial organization of nuclear pore complexes (PubMed:11071918). It is not a target for ced-3 during apoptosis, suggesting that lamin cleavage is not essential for apoptosis in C.elegans (PubMed:12064941).</text>
</comment>
<comment type="subunit">
    <text evidence="7 11 13">Interacts with LEM domain proteins lem-2 and emr-1 (PubMed:11870211, PubMed:12684533). May interact with unc-84; this interaction may be required to complete the connection between the nuclear lamina and the cytoskeleton (PubMed:25057012).</text>
</comment>
<comment type="interaction">
    <interactant intactId="EBI-314110">
        <id>Q21443</id>
    </interactant>
    <interactant intactId="EBI-2535391">
        <id>Q9XTB5</id>
        <label>lem-2</label>
    </interactant>
    <organismsDiffer>false</organismsDiffer>
    <experiments>3</experiments>
</comment>
<comment type="interaction">
    <interactant intactId="EBI-314110">
        <id>Q21443</id>
    </interactant>
    <interactant intactId="EBI-314110">
        <id>Q21443</id>
        <label>lmn-1</label>
    </interactant>
    <organismsDiffer>false</organismsDiffer>
    <experiments>3</experiments>
</comment>
<comment type="subcellular location">
    <subcellularLocation>
        <location evidence="12">Nucleus envelope</location>
    </subcellularLocation>
    <subcellularLocation>
        <location evidence="5 6 8 10 13">Nucleus inner membrane</location>
        <topology evidence="5 6 10">Lipid-anchor</topology>
        <orientation evidence="5 6 10">Nucleoplasmic side</orientation>
    </subcellularLocation>
    <text evidence="5 12">Remains in the nuclear envelope until late anaphase in early embryos. Depends on mel-28 for nuclear envelope localization after mitosis.</text>
</comment>
<comment type="tissue specificity">
    <text evidence="6">Ubiquitous. Expressed in all cells, except in cells undergoing spermatogenesis.</text>
</comment>
<comment type="developmental stage">
    <text evidence="6">Expressed throughout the development and in adults.</text>
</comment>
<comment type="disruption phenotype">
    <text evidence="7 13">RNAi-mediated knockdown results in the irregular localization of nuclear envelope associated proteins such as unc-84 (PubMed:11870211). RNAi-mediated knockdown results in nuclear migration defects in hyp7 hypodermal precursor cells (PubMed:25057012).</text>
</comment>
<comment type="miscellaneous">
    <text>It is the only lamin protein in C.elegans.</text>
</comment>
<comment type="similarity">
    <text evidence="3">Belongs to the intermediate filament family.</text>
</comment>
<feature type="initiator methionine" description="Removed" evidence="1">
    <location>
        <position position="1"/>
    </location>
</feature>
<feature type="chain" id="PRO_0000063826" description="Lamin-1">
    <location>
        <begin position="2"/>
        <end position="563"/>
    </location>
</feature>
<feature type="propeptide" id="PRO_0000403473" description="Removed in mature form" evidence="1">
    <location>
        <begin position="564"/>
        <end position="566"/>
    </location>
</feature>
<feature type="domain" description="IF rod" evidence="3">
    <location>
        <begin position="45"/>
        <end position="387"/>
    </location>
</feature>
<feature type="domain" description="LTD" evidence="2">
    <location>
        <begin position="435"/>
        <end position="550"/>
    </location>
</feature>
<feature type="region of interest" description="Disordered" evidence="4">
    <location>
        <begin position="1"/>
        <end position="37"/>
    </location>
</feature>
<feature type="region of interest" description="Head">
    <location>
        <begin position="13"/>
        <end position="47"/>
    </location>
</feature>
<feature type="region of interest" description="Coil 1A">
    <location>
        <begin position="48"/>
        <end position="82"/>
    </location>
</feature>
<feature type="region of interest" description="Linker 1">
    <location>
        <begin position="83"/>
        <end position="94"/>
    </location>
</feature>
<feature type="region of interest" description="Coil 1B">
    <location>
        <begin position="95"/>
        <end position="228"/>
    </location>
</feature>
<feature type="region of interest" description="Linker 2">
    <location>
        <begin position="229"/>
        <end position="256"/>
    </location>
</feature>
<feature type="region of interest" description="Coil 2">
    <location>
        <begin position="257"/>
        <end position="385"/>
    </location>
</feature>
<feature type="region of interest" description="Tail">
    <location>
        <begin position="386"/>
        <end position="566"/>
    </location>
</feature>
<feature type="region of interest" description="Disordered" evidence="4">
    <location>
        <begin position="528"/>
        <end position="566"/>
    </location>
</feature>
<feature type="compositionally biased region" description="Polar residues" evidence="4">
    <location>
        <begin position="541"/>
        <end position="556"/>
    </location>
</feature>
<feature type="modified residue" description="N-acetylserine" evidence="1">
    <location>
        <position position="2"/>
    </location>
</feature>
<feature type="modified residue" description="Cysteine methyl ester" evidence="1">
    <location>
        <position position="563"/>
    </location>
</feature>
<feature type="lipid moiety-binding region" description="S-farnesyl cysteine" evidence="1">
    <location>
        <position position="563"/>
    </location>
</feature>
<feature type="sequence conflict" description="In Ref. 1; CAA52188." evidence="14" ref="1">
    <original>A</original>
    <variation>R</variation>
    <location>
        <position position="499"/>
    </location>
</feature>